<sequence>MDRQLFENTEERPRTLHQLCEVVNKPLLELQLGCVFCKKALTASEVYNFAYTDLRVVYRDGYPYGVCKFCLLFYSKVRKLRYYNCSVYGASLEALTKKKLSDLSIRCYRCQHPLTPEEKQLHCDYKKRFHKISHMWTGSCLTCWRHTTATESAV</sequence>
<name>VE6_HPV53</name>
<protein>
    <recommendedName>
        <fullName evidence="1">Protein E6</fullName>
    </recommendedName>
</protein>
<keyword id="KW-0010">Activator</keyword>
<keyword id="KW-0238">DNA-binding</keyword>
<keyword id="KW-0244">Early protein</keyword>
<keyword id="KW-1035">Host cytoplasm</keyword>
<keyword id="KW-1048">Host nucleus</keyword>
<keyword id="KW-0945">Host-virus interaction</keyword>
<keyword id="KW-1090">Inhibition of host innate immune response by virus</keyword>
<keyword id="KW-0479">Metal-binding</keyword>
<keyword id="KW-1119">Modulation of host cell apoptosis by virus</keyword>
<keyword id="KW-0804">Transcription</keyword>
<keyword id="KW-0805">Transcription regulation</keyword>
<keyword id="KW-0899">Viral immunoevasion</keyword>
<keyword id="KW-0862">Zinc</keyword>
<keyword id="KW-0863">Zinc-finger</keyword>
<dbReference type="EMBL" id="X74482">
    <property type="protein sequence ID" value="CAA52591.1"/>
    <property type="molecule type" value="Genomic_DNA"/>
</dbReference>
<dbReference type="PIR" id="S36527">
    <property type="entry name" value="S36527"/>
</dbReference>
<dbReference type="RefSeq" id="NP_041844.1">
    <property type="nucleotide sequence ID" value="NC_001593.1"/>
</dbReference>
<dbReference type="SMR" id="P36815"/>
<dbReference type="GeneID" id="1489464"/>
<dbReference type="KEGG" id="vg:1489464"/>
<dbReference type="OrthoDB" id="27353at10239"/>
<dbReference type="Proteomes" id="UP000009126">
    <property type="component" value="Genome"/>
</dbReference>
<dbReference type="GO" id="GO:0030430">
    <property type="term" value="C:host cell cytoplasm"/>
    <property type="evidence" value="ECO:0007669"/>
    <property type="project" value="UniProtKB-SubCell"/>
</dbReference>
<dbReference type="GO" id="GO:0042025">
    <property type="term" value="C:host cell nucleus"/>
    <property type="evidence" value="ECO:0007669"/>
    <property type="project" value="UniProtKB-SubCell"/>
</dbReference>
<dbReference type="GO" id="GO:0003677">
    <property type="term" value="F:DNA binding"/>
    <property type="evidence" value="ECO:0007669"/>
    <property type="project" value="UniProtKB-UniRule"/>
</dbReference>
<dbReference type="GO" id="GO:0008270">
    <property type="term" value="F:zinc ion binding"/>
    <property type="evidence" value="ECO:0007669"/>
    <property type="project" value="UniProtKB-KW"/>
</dbReference>
<dbReference type="GO" id="GO:0006351">
    <property type="term" value="P:DNA-templated transcription"/>
    <property type="evidence" value="ECO:0007669"/>
    <property type="project" value="UniProtKB-UniRule"/>
</dbReference>
<dbReference type="GO" id="GO:0006355">
    <property type="term" value="P:regulation of DNA-templated transcription"/>
    <property type="evidence" value="ECO:0007669"/>
    <property type="project" value="UniProtKB-UniRule"/>
</dbReference>
<dbReference type="GO" id="GO:0052150">
    <property type="term" value="P:symbiont-mediated perturbation of host apoptosis"/>
    <property type="evidence" value="ECO:0007669"/>
    <property type="project" value="UniProtKB-KW"/>
</dbReference>
<dbReference type="GO" id="GO:0039648">
    <property type="term" value="P:symbiont-mediated perturbation of host ubiquitin-like protein modification"/>
    <property type="evidence" value="ECO:0007669"/>
    <property type="project" value="UniProtKB-UniRule"/>
</dbReference>
<dbReference type="GO" id="GO:0052170">
    <property type="term" value="P:symbiont-mediated suppression of host innate immune response"/>
    <property type="evidence" value="ECO:0007669"/>
    <property type="project" value="UniProtKB-KW"/>
</dbReference>
<dbReference type="GO" id="GO:0039502">
    <property type="term" value="P:symbiont-mediated suppression of host type I interferon-mediated signaling pathway"/>
    <property type="evidence" value="ECO:0007669"/>
    <property type="project" value="UniProtKB-UniRule"/>
</dbReference>
<dbReference type="Gene3D" id="3.30.240.40">
    <property type="entry name" value="E6 early regulatory protein"/>
    <property type="match status" value="2"/>
</dbReference>
<dbReference type="HAMAP" id="MF_04006">
    <property type="entry name" value="HPV_E6"/>
    <property type="match status" value="1"/>
</dbReference>
<dbReference type="InterPro" id="IPR001334">
    <property type="entry name" value="E6"/>
</dbReference>
<dbReference type="InterPro" id="IPR038575">
    <property type="entry name" value="E6_sf"/>
</dbReference>
<dbReference type="Pfam" id="PF00518">
    <property type="entry name" value="E6"/>
    <property type="match status" value="1"/>
</dbReference>
<dbReference type="SUPFAM" id="SSF161229">
    <property type="entry name" value="E6 C-terminal domain-like"/>
    <property type="match status" value="2"/>
</dbReference>
<comment type="function">
    <text evidence="1">Plays a major role in the induction and maintenance of cellular transformation. E6 associates with host UBE3A/E6-AP ubiquitin-protein ligase and modulates its activity. Sequesters tumor suppressor TP53 in the host cytoplasm and modulates its activity by interacting with host EP300 that results in the reduction of TP53 acetylation and activation. In turn, apoptosis induced by DNA damage is inhibited. E6 also protects host keratinocytes from apoptosis by mediating the degradation of host BAK1. May also inhibit host immune response.</text>
</comment>
<comment type="subunit">
    <text evidence="1">Forms homodimers. Interacts with ubiquitin-protein ligase UBE3A/E6-AP; this interaction stimulates UBE3A ubiquitin activity. Interacts with host TP53 and EP300; this interaction inhibits TP53 activity.</text>
</comment>
<comment type="subcellular location">
    <subcellularLocation>
        <location evidence="1">Host cytoplasm</location>
    </subcellularLocation>
    <subcellularLocation>
        <location evidence="1">Host nucleus</location>
    </subcellularLocation>
</comment>
<comment type="miscellaneous">
    <text evidence="1">Belongs to the low risk human alphapapillomavirus family. The cancer-causing human papillomavirus E6 protein has a unique carboxy terminal PDZ domain containing substrate but low risk E6s do not possess this domain.</text>
</comment>
<comment type="similarity">
    <text evidence="2">Belongs to the papillomaviridae E6 protein family.</text>
</comment>
<organism>
    <name type="scientific">Human papillomavirus type 53</name>
    <dbReference type="NCBI Taxonomy" id="333765"/>
    <lineage>
        <taxon>Viruses</taxon>
        <taxon>Monodnaviria</taxon>
        <taxon>Shotokuvirae</taxon>
        <taxon>Cossaviricota</taxon>
        <taxon>Papovaviricetes</taxon>
        <taxon>Zurhausenvirales</taxon>
        <taxon>Papillomaviridae</taxon>
        <taxon>Firstpapillomavirinae</taxon>
        <taxon>Alphapapillomavirus</taxon>
        <taxon>Alphapapillomavirus 6</taxon>
    </lineage>
</organism>
<organismHost>
    <name type="scientific">Homo sapiens</name>
    <name type="common">Human</name>
    <dbReference type="NCBI Taxonomy" id="9606"/>
</organismHost>
<gene>
    <name evidence="1" type="primary">E6</name>
</gene>
<evidence type="ECO:0000255" key="1">
    <source>
        <dbReference type="HAMAP-Rule" id="MF_04006"/>
    </source>
</evidence>
<evidence type="ECO:0000305" key="2"/>
<proteinExistence type="inferred from homology"/>
<reference key="1">
    <citation type="journal article" date="1994" name="Curr. Top. Microbiol. Immunol.">
        <title>Primer-directed sequencing of human papillomavirus types.</title>
        <authorList>
            <person name="Delius H."/>
            <person name="Hofmann B."/>
        </authorList>
    </citation>
    <scope>NUCLEOTIDE SEQUENCE [GENOMIC DNA]</scope>
</reference>
<accession>P36815</accession>
<feature type="chain" id="PRO_0000133370" description="Protein E6">
    <location>
        <begin position="1"/>
        <end position="154"/>
    </location>
</feature>
<feature type="zinc finger region" evidence="1">
    <location>
        <begin position="34"/>
        <end position="70"/>
    </location>
</feature>
<feature type="zinc finger region" evidence="1">
    <location>
        <begin position="107"/>
        <end position="143"/>
    </location>
</feature>